<accession>B7MK76</accession>
<keyword id="KW-1185">Reference proteome</keyword>
<feature type="chain" id="PRO_0000375300" description="Protein YcgL">
    <location>
        <begin position="1"/>
        <end position="108"/>
    </location>
</feature>
<feature type="domain" description="YcgL" evidence="1">
    <location>
        <begin position="12"/>
        <end position="96"/>
    </location>
</feature>
<protein>
    <recommendedName>
        <fullName evidence="1">Protein YcgL</fullName>
    </recommendedName>
</protein>
<sequence>MPKPGILKSKSMFCVIYRSSKRDQTYLYVEKKDDFSRVPEELMKGFGQPQLAMILPLDGRKKLVNADIEKVKQALTEQGYYLQLPPPPEDLLKQHLSVMGQKTDDTNK</sequence>
<organism>
    <name type="scientific">Escherichia coli O45:K1 (strain S88 / ExPEC)</name>
    <dbReference type="NCBI Taxonomy" id="585035"/>
    <lineage>
        <taxon>Bacteria</taxon>
        <taxon>Pseudomonadati</taxon>
        <taxon>Pseudomonadota</taxon>
        <taxon>Gammaproteobacteria</taxon>
        <taxon>Enterobacterales</taxon>
        <taxon>Enterobacteriaceae</taxon>
        <taxon>Escherichia</taxon>
    </lineage>
</organism>
<name>YCGL_ECO45</name>
<gene>
    <name evidence="1" type="primary">ycgL</name>
    <name type="ordered locus">ECS88_1242</name>
</gene>
<evidence type="ECO:0000255" key="1">
    <source>
        <dbReference type="HAMAP-Rule" id="MF_01866"/>
    </source>
</evidence>
<reference key="1">
    <citation type="journal article" date="2009" name="PLoS Genet.">
        <title>Organised genome dynamics in the Escherichia coli species results in highly diverse adaptive paths.</title>
        <authorList>
            <person name="Touchon M."/>
            <person name="Hoede C."/>
            <person name="Tenaillon O."/>
            <person name="Barbe V."/>
            <person name="Baeriswyl S."/>
            <person name="Bidet P."/>
            <person name="Bingen E."/>
            <person name="Bonacorsi S."/>
            <person name="Bouchier C."/>
            <person name="Bouvet O."/>
            <person name="Calteau A."/>
            <person name="Chiapello H."/>
            <person name="Clermont O."/>
            <person name="Cruveiller S."/>
            <person name="Danchin A."/>
            <person name="Diard M."/>
            <person name="Dossat C."/>
            <person name="Karoui M.E."/>
            <person name="Frapy E."/>
            <person name="Garry L."/>
            <person name="Ghigo J.M."/>
            <person name="Gilles A.M."/>
            <person name="Johnson J."/>
            <person name="Le Bouguenec C."/>
            <person name="Lescat M."/>
            <person name="Mangenot S."/>
            <person name="Martinez-Jehanne V."/>
            <person name="Matic I."/>
            <person name="Nassif X."/>
            <person name="Oztas S."/>
            <person name="Petit M.A."/>
            <person name="Pichon C."/>
            <person name="Rouy Z."/>
            <person name="Ruf C.S."/>
            <person name="Schneider D."/>
            <person name="Tourret J."/>
            <person name="Vacherie B."/>
            <person name="Vallenet D."/>
            <person name="Medigue C."/>
            <person name="Rocha E.P.C."/>
            <person name="Denamur E."/>
        </authorList>
    </citation>
    <scope>NUCLEOTIDE SEQUENCE [LARGE SCALE GENOMIC DNA]</scope>
    <source>
        <strain>S88 / ExPEC</strain>
    </source>
</reference>
<dbReference type="EMBL" id="CU928161">
    <property type="protein sequence ID" value="CAR02568.1"/>
    <property type="molecule type" value="Genomic_DNA"/>
</dbReference>
<dbReference type="SMR" id="B7MK76"/>
<dbReference type="KEGG" id="ecz:ECS88_1242"/>
<dbReference type="HOGENOM" id="CLU_155118_1_0_6"/>
<dbReference type="Proteomes" id="UP000000747">
    <property type="component" value="Chromosome"/>
</dbReference>
<dbReference type="Gene3D" id="3.10.510.20">
    <property type="entry name" value="YcgL domain"/>
    <property type="match status" value="1"/>
</dbReference>
<dbReference type="HAMAP" id="MF_01866">
    <property type="entry name" value="UPF0745"/>
    <property type="match status" value="1"/>
</dbReference>
<dbReference type="InterPro" id="IPR038068">
    <property type="entry name" value="YcgL-like_sf"/>
</dbReference>
<dbReference type="InterPro" id="IPR027354">
    <property type="entry name" value="YcgL_dom"/>
</dbReference>
<dbReference type="PANTHER" id="PTHR38109">
    <property type="entry name" value="PROTEIN YCGL"/>
    <property type="match status" value="1"/>
</dbReference>
<dbReference type="PANTHER" id="PTHR38109:SF1">
    <property type="entry name" value="PROTEIN YCGL"/>
    <property type="match status" value="1"/>
</dbReference>
<dbReference type="Pfam" id="PF05166">
    <property type="entry name" value="YcgL"/>
    <property type="match status" value="1"/>
</dbReference>
<dbReference type="SUPFAM" id="SSF160191">
    <property type="entry name" value="YcgL-like"/>
    <property type="match status" value="1"/>
</dbReference>
<dbReference type="PROSITE" id="PS51648">
    <property type="entry name" value="YCGL"/>
    <property type="match status" value="1"/>
</dbReference>
<proteinExistence type="inferred from homology"/>